<keyword id="KW-0067">ATP-binding</keyword>
<keyword id="KW-0244">Early protein</keyword>
<keyword id="KW-1048">Host nucleus</keyword>
<keyword id="KW-0945">Host-virus interaction</keyword>
<keyword id="KW-1090">Inhibition of host innate immune response by virus</keyword>
<keyword id="KW-1092">Inhibition of host IRF3 by virus</keyword>
<keyword id="KW-1113">Inhibition of host RLR pathway by virus</keyword>
<keyword id="KW-0418">Kinase</keyword>
<keyword id="KW-1122">Modulation of host chromatin by virus</keyword>
<keyword id="KW-0547">Nucleotide-binding</keyword>
<keyword id="KW-0723">Serine/threonine-protein kinase</keyword>
<keyword id="KW-0808">Transferase</keyword>
<keyword id="KW-0899">Viral immunoevasion</keyword>
<keyword id="KW-0946">Virion</keyword>
<keyword id="KW-0920">Virion tegument</keyword>
<organismHost>
    <name type="scientific">Homo sapiens</name>
    <name type="common">Human</name>
    <dbReference type="NCBI Taxonomy" id="9606"/>
</organismHost>
<dbReference type="EC" id="2.7.11.1"/>
<dbReference type="EMBL" id="AY961628">
    <property type="status" value="NOT_ANNOTATED_CDS"/>
    <property type="molecule type" value="Genomic_DNA"/>
</dbReference>
<dbReference type="RefSeq" id="YP_401688.1">
    <property type="nucleotide sequence ID" value="NC_007605.1"/>
</dbReference>
<dbReference type="BioGRID" id="971746">
    <property type="interactions" value="9"/>
</dbReference>
<dbReference type="IntAct" id="P0C731">
    <property type="interactions" value="3"/>
</dbReference>
<dbReference type="ChEMBL" id="CHEMBL3833483"/>
<dbReference type="iPTMnet" id="P0C731"/>
<dbReference type="DNASU" id="3783704"/>
<dbReference type="GeneID" id="3783704"/>
<dbReference type="KEGG" id="vg:3783704"/>
<dbReference type="Proteomes" id="UP000007641">
    <property type="component" value="Genome"/>
</dbReference>
<dbReference type="GO" id="GO:0042025">
    <property type="term" value="C:host cell nucleus"/>
    <property type="evidence" value="ECO:0007669"/>
    <property type="project" value="UniProtKB-SubCell"/>
</dbReference>
<dbReference type="GO" id="GO:0019033">
    <property type="term" value="C:viral tegument"/>
    <property type="evidence" value="ECO:0007669"/>
    <property type="project" value="UniProtKB-SubCell"/>
</dbReference>
<dbReference type="GO" id="GO:0005524">
    <property type="term" value="F:ATP binding"/>
    <property type="evidence" value="ECO:0007669"/>
    <property type="project" value="UniProtKB-KW"/>
</dbReference>
<dbReference type="GO" id="GO:0106310">
    <property type="term" value="F:protein serine kinase activity"/>
    <property type="evidence" value="ECO:0007669"/>
    <property type="project" value="RHEA"/>
</dbReference>
<dbReference type="GO" id="GO:0004674">
    <property type="term" value="F:protein serine/threonine kinase activity"/>
    <property type="evidence" value="ECO:0007669"/>
    <property type="project" value="UniProtKB-KW"/>
</dbReference>
<dbReference type="GO" id="GO:0039525">
    <property type="term" value="P:symbiont-mediated perturbation of host chromatin organization"/>
    <property type="evidence" value="ECO:0007669"/>
    <property type="project" value="UniProtKB-KW"/>
</dbReference>
<dbReference type="GO" id="GO:0039548">
    <property type="term" value="P:symbiont-mediated suppression of host cytoplasmic pattern recognition receptor signaling pathway via inhibition of IRF3 activity"/>
    <property type="evidence" value="ECO:0007669"/>
    <property type="project" value="UniProtKB-KW"/>
</dbReference>
<dbReference type="FunFam" id="1.10.510.10:FF:001645">
    <property type="entry name" value="Serine/threonine-protein kinase BGLF4"/>
    <property type="match status" value="1"/>
</dbReference>
<dbReference type="Gene3D" id="1.10.510.10">
    <property type="entry name" value="Transferase(Phosphotransferase) domain 1"/>
    <property type="match status" value="1"/>
</dbReference>
<dbReference type="InterPro" id="IPR011009">
    <property type="entry name" value="Kinase-like_dom_sf"/>
</dbReference>
<dbReference type="InterPro" id="IPR000719">
    <property type="entry name" value="Prot_kinase_dom"/>
</dbReference>
<dbReference type="InterPro" id="IPR008266">
    <property type="entry name" value="Tyr_kinase_AS"/>
</dbReference>
<dbReference type="SMART" id="SM00220">
    <property type="entry name" value="S_TKc"/>
    <property type="match status" value="1"/>
</dbReference>
<dbReference type="SUPFAM" id="SSF56112">
    <property type="entry name" value="Protein kinase-like (PK-like)"/>
    <property type="match status" value="1"/>
</dbReference>
<dbReference type="PROSITE" id="PS50011">
    <property type="entry name" value="PROTEIN_KINASE_DOM"/>
    <property type="match status" value="1"/>
</dbReference>
<dbReference type="PROSITE" id="PS00109">
    <property type="entry name" value="PROTEIN_KINASE_TYR"/>
    <property type="match status" value="1"/>
</dbReference>
<feature type="chain" id="PRO_0000375960" description="Serine/threonine-protein kinase BGLF4">
    <location>
        <begin position="1"/>
        <end position="429"/>
    </location>
</feature>
<feature type="domain" description="Protein kinase" evidence="2">
    <location>
        <begin position="1"/>
        <end position="409"/>
    </location>
</feature>
<feature type="region of interest" description="Disordered" evidence="4">
    <location>
        <begin position="1"/>
        <end position="27"/>
    </location>
</feature>
<feature type="region of interest" description="SUMO interaction motif" evidence="1">
    <location>
        <begin position="36"/>
        <end position="40"/>
    </location>
</feature>
<feature type="region of interest" description="SUMO interaction motif" evidence="1">
    <location>
        <begin position="344"/>
        <end position="350"/>
    </location>
</feature>
<feature type="compositionally biased region" description="Low complexity" evidence="4">
    <location>
        <begin position="14"/>
        <end position="23"/>
    </location>
</feature>
<feature type="active site" description="Proton acceptor" evidence="2 3">
    <location>
        <position position="195"/>
    </location>
</feature>
<feature type="binding site" evidence="2">
    <location>
        <begin position="110"/>
        <end position="118"/>
    </location>
    <ligand>
        <name>ATP</name>
        <dbReference type="ChEBI" id="CHEBI:30616"/>
    </ligand>
</feature>
<feature type="binding site" evidence="2">
    <location>
        <position position="128"/>
    </location>
    <ligand>
        <name>ATP</name>
        <dbReference type="ChEBI" id="CHEBI:30616"/>
    </ligand>
</feature>
<reference key="1">
    <citation type="journal article" date="2005" name="J. Virol.">
        <title>Genomic sequence analysis of Epstein-Barr virus strain GD1 from a nasopharyngeal carcinoma patient.</title>
        <authorList>
            <person name="Zeng M.-S."/>
            <person name="Li D.-J."/>
            <person name="Liu Q.-L."/>
            <person name="Song L.-B."/>
            <person name="Li M.-Z."/>
            <person name="Zhang R.-H."/>
            <person name="Yu X.-J."/>
            <person name="Wang H.-M."/>
            <person name="Ernberg I."/>
            <person name="Zeng Y.-X."/>
        </authorList>
    </citation>
    <scope>NUCLEOTIDE SEQUENCE [LARGE SCALE GENOMIC DNA]</scope>
</reference>
<accession>P0C731</accession>
<protein>
    <recommendedName>
        <fullName>Serine/threonine-protein kinase BGLF4</fullName>
        <ecNumber>2.7.11.1</ecNumber>
    </recommendedName>
</protein>
<organism>
    <name type="scientific">Epstein-Barr virus (strain GD1)</name>
    <name type="common">HHV-4</name>
    <name type="synonym">Human gammaherpesvirus 4</name>
    <dbReference type="NCBI Taxonomy" id="10376"/>
    <lineage>
        <taxon>Viruses</taxon>
        <taxon>Duplodnaviria</taxon>
        <taxon>Heunggongvirae</taxon>
        <taxon>Peploviricota</taxon>
        <taxon>Herviviricetes</taxon>
        <taxon>Herpesvirales</taxon>
        <taxon>Orthoherpesviridae</taxon>
        <taxon>Gammaherpesvirinae</taxon>
        <taxon>Lymphocryptovirus</taxon>
        <taxon>Lymphocryptovirus humangamma4</taxon>
    </lineage>
</organism>
<name>KR2_EBVG</name>
<evidence type="ECO:0000250" key="1">
    <source>
        <dbReference type="UniProtKB" id="P13288"/>
    </source>
</evidence>
<evidence type="ECO:0000255" key="2">
    <source>
        <dbReference type="PROSITE-ProRule" id="PRU00159"/>
    </source>
</evidence>
<evidence type="ECO:0000255" key="3">
    <source>
        <dbReference type="PROSITE-ProRule" id="PRU10028"/>
    </source>
</evidence>
<evidence type="ECO:0000256" key="4">
    <source>
        <dbReference type="SAM" id="MobiDB-lite"/>
    </source>
</evidence>
<gene>
    <name type="ORF">BGLF4</name>
</gene>
<comment type="function">
    <text evidence="1">Plays many key roles by phosphorylating several proteins including the viral DNA processivity factor BMRF1, EBNA1 or EBNA2. Modifies the host nuclear envelope structure and induces the redistribution of nuclear envelope-associated proteins by phosphorylating host nucleoporins. Subsequently, promotes the nuclear transport of EBV lytic proteins. Required for efficient lytic DNA replication and release of nucleocapsids from the nucleus. Contributes to the compaction of host cell chromatin in cells undergoing lytic replication, presumably by phosphorylating the host condensin complex and host TOP2A. Induces disassembly of the nuclear lamina by phosphorylating with host LMNA. Phosphorylates substrates involved in capsid assembly and DNA packaging. Facilitates the switch from latent to lytic DNA replication by down-regulating EBNA1 replication function. Phosphorylates the viral immediate-early protein BZLF1 and inhibits its sumoylation by interacting with host SUMO1 and SUMO2. Phosphorylates also host SAMHD1 and thereby counteracts its antiviral effect by reducing its dNTP hydrolase activity.</text>
</comment>
<comment type="catalytic activity">
    <reaction>
        <text>L-seryl-[protein] + ATP = O-phospho-L-seryl-[protein] + ADP + H(+)</text>
        <dbReference type="Rhea" id="RHEA:17989"/>
        <dbReference type="Rhea" id="RHEA-COMP:9863"/>
        <dbReference type="Rhea" id="RHEA-COMP:11604"/>
        <dbReference type="ChEBI" id="CHEBI:15378"/>
        <dbReference type="ChEBI" id="CHEBI:29999"/>
        <dbReference type="ChEBI" id="CHEBI:30616"/>
        <dbReference type="ChEBI" id="CHEBI:83421"/>
        <dbReference type="ChEBI" id="CHEBI:456216"/>
        <dbReference type="EC" id="2.7.11.1"/>
    </reaction>
</comment>
<comment type="catalytic activity">
    <reaction>
        <text>L-threonyl-[protein] + ATP = O-phospho-L-threonyl-[protein] + ADP + H(+)</text>
        <dbReference type="Rhea" id="RHEA:46608"/>
        <dbReference type="Rhea" id="RHEA-COMP:11060"/>
        <dbReference type="Rhea" id="RHEA-COMP:11605"/>
        <dbReference type="ChEBI" id="CHEBI:15378"/>
        <dbReference type="ChEBI" id="CHEBI:30013"/>
        <dbReference type="ChEBI" id="CHEBI:30616"/>
        <dbReference type="ChEBI" id="CHEBI:61977"/>
        <dbReference type="ChEBI" id="CHEBI:456216"/>
        <dbReference type="EC" id="2.7.11.1"/>
    </reaction>
</comment>
<comment type="subunit">
    <text evidence="1">Interacts with host NUP62 and NUP153; this interaction plays a role in nuclear targeting of BGLF4. Interacts with host SUMO1 and SUMO2.</text>
</comment>
<comment type="interaction">
    <interactant intactId="EBI-2621032">
        <id>P0C731</id>
    </interactant>
    <interactant intactId="EBI-2621028">
        <id>Q3KSQ2</id>
        <label>TK</label>
    </interactant>
    <organismsDiffer>false</organismsDiffer>
    <experiments>2</experiments>
</comment>
<comment type="subcellular location">
    <subcellularLocation>
        <location evidence="1">Virion tegument</location>
    </subcellularLocation>
    <subcellularLocation>
        <location evidence="1">Host nucleus</location>
    </subcellularLocation>
    <text evidence="1">the protein is present at discrete sites in nuclei, called replication compartments where viral DNA replication occurs.</text>
</comment>
<comment type="similarity">
    <text evidence="2">Belongs to the protein kinase superfamily. Ser/Thr protein kinase family.</text>
</comment>
<sequence>MDVNMAAELSPTNSSSSGELSVSPEPPRETQAFLGKVTVIDYFTFQHKHLKVTNIDDMTETLYVKLPENMTRCDHLPITCEYLLGRGSYGAVYAHADNATVKLYDSVTELYHELMVCDMIQIGKATAEDGQDKALVDYLSACTSCHALFMPQFRCSLQDYGHWHDGSIEPLVRGFQGLKDAVYFLNRHCGLFHSDISPSNILVDFTDTMWGMGRLVLTDYGTASLHDRNKMLDVRLKSSKGRQLYRLYCQREPFSIAKDTYKPLCLLSKCYILRGAGHIPDPSACGPVGAQTALRLDLQSLGYSLLYGIMHLADSTHKIPYPNPDMGFDRSDPLYFLQFAAPKVVLLEVLSQMWNLNLDMGLTSCGESPCVDVTAEHMSQFLQWCRSLKKRFKESYFFNCRPRFEHPHLPGLVAELLADDFFGPDGRRG</sequence>
<proteinExistence type="evidence at protein level"/>